<reference key="1">
    <citation type="journal article" date="2010" name="Genome Biol. Evol.">
        <title>Continuing evolution of Burkholderia mallei through genome reduction and large-scale rearrangements.</title>
        <authorList>
            <person name="Losada L."/>
            <person name="Ronning C.M."/>
            <person name="DeShazer D."/>
            <person name="Woods D."/>
            <person name="Fedorova N."/>
            <person name="Kim H.S."/>
            <person name="Shabalina S.A."/>
            <person name="Pearson T.R."/>
            <person name="Brinkac L."/>
            <person name="Tan P."/>
            <person name="Nandi T."/>
            <person name="Crabtree J."/>
            <person name="Badger J."/>
            <person name="Beckstrom-Sternberg S."/>
            <person name="Saqib M."/>
            <person name="Schutzer S.E."/>
            <person name="Keim P."/>
            <person name="Nierman W.C."/>
        </authorList>
    </citation>
    <scope>NUCLEOTIDE SEQUENCE [LARGE SCALE GENOMIC DNA]</scope>
    <source>
        <strain>1106a</strain>
    </source>
</reference>
<protein>
    <recommendedName>
        <fullName evidence="1">Transcription antitermination protein NusB</fullName>
    </recommendedName>
    <alternativeName>
        <fullName evidence="1">Antitermination factor NusB</fullName>
    </alternativeName>
</protein>
<proteinExistence type="inferred from homology"/>
<name>NUSB_BURP0</name>
<evidence type="ECO:0000255" key="1">
    <source>
        <dbReference type="HAMAP-Rule" id="MF_00073"/>
    </source>
</evidence>
<comment type="function">
    <text evidence="1">Involved in transcription antitermination. Required for transcription of ribosomal RNA (rRNA) genes. Binds specifically to the boxA antiterminator sequence of the ribosomal RNA (rrn) operons.</text>
</comment>
<comment type="similarity">
    <text evidence="1">Belongs to the NusB family.</text>
</comment>
<accession>A3NY89</accession>
<sequence length="145" mass="15981">MKKSARRQSRELATQGLYQWLLSNAAPGEIDAQLRGALGYDKADKTLLDTILHGVIREHATLAEAISPSLDRPIDQLSPVERAVLLIATYELTHQIETPYRVIINEAVELAKTFGGSDGYKYVNGVLDKLAVKLRPAETQARRGA</sequence>
<keyword id="KW-0694">RNA-binding</keyword>
<keyword id="KW-0804">Transcription</keyword>
<keyword id="KW-0889">Transcription antitermination</keyword>
<keyword id="KW-0805">Transcription regulation</keyword>
<gene>
    <name evidence="1" type="primary">nusB</name>
    <name type="ordered locus">BURPS1106A_3071</name>
</gene>
<organism>
    <name type="scientific">Burkholderia pseudomallei (strain 1106a)</name>
    <dbReference type="NCBI Taxonomy" id="357348"/>
    <lineage>
        <taxon>Bacteria</taxon>
        <taxon>Pseudomonadati</taxon>
        <taxon>Pseudomonadota</taxon>
        <taxon>Betaproteobacteria</taxon>
        <taxon>Burkholderiales</taxon>
        <taxon>Burkholderiaceae</taxon>
        <taxon>Burkholderia</taxon>
        <taxon>pseudomallei group</taxon>
    </lineage>
</organism>
<dbReference type="EMBL" id="CP000572">
    <property type="protein sequence ID" value="ABN90115.1"/>
    <property type="molecule type" value="Genomic_DNA"/>
</dbReference>
<dbReference type="RefSeq" id="WP_004185707.1">
    <property type="nucleotide sequence ID" value="NC_009076.1"/>
</dbReference>
<dbReference type="SMR" id="A3NY89"/>
<dbReference type="GeneID" id="93061205"/>
<dbReference type="KEGG" id="bpl:BURPS1106A_3071"/>
<dbReference type="HOGENOM" id="CLU_087843_4_1_4"/>
<dbReference type="Proteomes" id="UP000006738">
    <property type="component" value="Chromosome I"/>
</dbReference>
<dbReference type="GO" id="GO:0005829">
    <property type="term" value="C:cytosol"/>
    <property type="evidence" value="ECO:0007669"/>
    <property type="project" value="TreeGrafter"/>
</dbReference>
<dbReference type="GO" id="GO:0003723">
    <property type="term" value="F:RNA binding"/>
    <property type="evidence" value="ECO:0007669"/>
    <property type="project" value="UniProtKB-UniRule"/>
</dbReference>
<dbReference type="GO" id="GO:0006353">
    <property type="term" value="P:DNA-templated transcription termination"/>
    <property type="evidence" value="ECO:0007669"/>
    <property type="project" value="UniProtKB-UniRule"/>
</dbReference>
<dbReference type="GO" id="GO:0031564">
    <property type="term" value="P:transcription antitermination"/>
    <property type="evidence" value="ECO:0007669"/>
    <property type="project" value="UniProtKB-KW"/>
</dbReference>
<dbReference type="Gene3D" id="1.10.940.10">
    <property type="entry name" value="NusB-like"/>
    <property type="match status" value="1"/>
</dbReference>
<dbReference type="HAMAP" id="MF_00073">
    <property type="entry name" value="NusB"/>
    <property type="match status" value="1"/>
</dbReference>
<dbReference type="InterPro" id="IPR035926">
    <property type="entry name" value="NusB-like_sf"/>
</dbReference>
<dbReference type="InterPro" id="IPR011605">
    <property type="entry name" value="NusB_fam"/>
</dbReference>
<dbReference type="InterPro" id="IPR006027">
    <property type="entry name" value="NusB_RsmB_TIM44"/>
</dbReference>
<dbReference type="NCBIfam" id="TIGR01951">
    <property type="entry name" value="nusB"/>
    <property type="match status" value="1"/>
</dbReference>
<dbReference type="PANTHER" id="PTHR11078:SF3">
    <property type="entry name" value="ANTITERMINATION NUSB DOMAIN-CONTAINING PROTEIN"/>
    <property type="match status" value="1"/>
</dbReference>
<dbReference type="PANTHER" id="PTHR11078">
    <property type="entry name" value="N UTILIZATION SUBSTANCE PROTEIN B-RELATED"/>
    <property type="match status" value="1"/>
</dbReference>
<dbReference type="Pfam" id="PF01029">
    <property type="entry name" value="NusB"/>
    <property type="match status" value="1"/>
</dbReference>
<dbReference type="SUPFAM" id="SSF48013">
    <property type="entry name" value="NusB-like"/>
    <property type="match status" value="1"/>
</dbReference>
<feature type="chain" id="PRO_1000023716" description="Transcription antitermination protein NusB">
    <location>
        <begin position="1"/>
        <end position="145"/>
    </location>
</feature>